<accession>P75737</accession>
<accession>Q2MBJ8</accession>
<comment type="subcellular location">
    <subcellularLocation>
        <location evidence="2">Cell membrane</location>
        <topology evidence="2">Lipid-anchor</topology>
    </subcellularLocation>
</comment>
<dbReference type="EMBL" id="U00096">
    <property type="protein sequence ID" value="AAC73783.1"/>
    <property type="molecule type" value="Genomic_DNA"/>
</dbReference>
<dbReference type="EMBL" id="AP009048">
    <property type="protein sequence ID" value="BAE76358.1"/>
    <property type="molecule type" value="Genomic_DNA"/>
</dbReference>
<dbReference type="PIR" id="H64803">
    <property type="entry name" value="H64803"/>
</dbReference>
<dbReference type="RefSeq" id="NP_415215.1">
    <property type="nucleotide sequence ID" value="NC_000913.3"/>
</dbReference>
<dbReference type="RefSeq" id="WP_000856353.1">
    <property type="nucleotide sequence ID" value="NZ_SSZK01000045.1"/>
</dbReference>
<dbReference type="BioGRID" id="4261206">
    <property type="interactions" value="122"/>
</dbReference>
<dbReference type="FunCoup" id="P75737">
    <property type="interactions" value="13"/>
</dbReference>
<dbReference type="STRING" id="511145.b0689"/>
<dbReference type="PaxDb" id="511145-b0689"/>
<dbReference type="EnsemblBacteria" id="AAC73783">
    <property type="protein sequence ID" value="AAC73783"/>
    <property type="gene ID" value="b0689"/>
</dbReference>
<dbReference type="GeneID" id="945274"/>
<dbReference type="KEGG" id="ecj:JW0676"/>
<dbReference type="KEGG" id="eco:b0689"/>
<dbReference type="KEGG" id="ecoc:C3026_03435"/>
<dbReference type="PATRIC" id="fig|1411691.4.peg.1587"/>
<dbReference type="EchoBASE" id="EB3910"/>
<dbReference type="HOGENOM" id="CLU_1616499_0_0_6"/>
<dbReference type="InParanoid" id="P75737"/>
<dbReference type="OMA" id="NIAPSRC"/>
<dbReference type="OrthoDB" id="6637468at2"/>
<dbReference type="BioCyc" id="EcoCyc:G6374-MONOMER"/>
<dbReference type="PRO" id="PR:P75737"/>
<dbReference type="Proteomes" id="UP000000625">
    <property type="component" value="Chromosome"/>
</dbReference>
<dbReference type="GO" id="GO:0005886">
    <property type="term" value="C:plasma membrane"/>
    <property type="evidence" value="ECO:0007669"/>
    <property type="project" value="UniProtKB-SubCell"/>
</dbReference>
<dbReference type="PROSITE" id="PS51257">
    <property type="entry name" value="PROKAR_LIPOPROTEIN"/>
    <property type="match status" value="1"/>
</dbReference>
<organism>
    <name type="scientific">Escherichia coli (strain K12)</name>
    <dbReference type="NCBI Taxonomy" id="83333"/>
    <lineage>
        <taxon>Bacteria</taxon>
        <taxon>Pseudomonadati</taxon>
        <taxon>Pseudomonadota</taxon>
        <taxon>Gammaproteobacteria</taxon>
        <taxon>Enterobacterales</taxon>
        <taxon>Enterobacteriaceae</taxon>
        <taxon>Escherichia</taxon>
    </lineage>
</organism>
<proteinExistence type="inferred from homology"/>
<reference key="1">
    <citation type="journal article" date="1997" name="Science">
        <title>The complete genome sequence of Escherichia coli K-12.</title>
        <authorList>
            <person name="Blattner F.R."/>
            <person name="Plunkett G. III"/>
            <person name="Bloch C.A."/>
            <person name="Perna N.T."/>
            <person name="Burland V."/>
            <person name="Riley M."/>
            <person name="Collado-Vides J."/>
            <person name="Glasner J.D."/>
            <person name="Rode C.K."/>
            <person name="Mayhew G.F."/>
            <person name="Gregor J."/>
            <person name="Davis N.W."/>
            <person name="Kirkpatrick H.A."/>
            <person name="Goeden M.A."/>
            <person name="Rose D.J."/>
            <person name="Mau B."/>
            <person name="Shao Y."/>
        </authorList>
    </citation>
    <scope>NUCLEOTIDE SEQUENCE [LARGE SCALE GENOMIC DNA]</scope>
    <source>
        <strain>K12 / MG1655 / ATCC 47076</strain>
    </source>
</reference>
<reference key="2">
    <citation type="journal article" date="2006" name="Mol. Syst. Biol.">
        <title>Highly accurate genome sequences of Escherichia coli K-12 strains MG1655 and W3110.</title>
        <authorList>
            <person name="Hayashi K."/>
            <person name="Morooka N."/>
            <person name="Yamamoto Y."/>
            <person name="Fujita K."/>
            <person name="Isono K."/>
            <person name="Choi S."/>
            <person name="Ohtsubo E."/>
            <person name="Baba T."/>
            <person name="Wanner B.L."/>
            <person name="Mori H."/>
            <person name="Horiuchi T."/>
        </authorList>
    </citation>
    <scope>NUCLEOTIDE SEQUENCE [LARGE SCALE GENOMIC DNA]</scope>
    <source>
        <strain>K12 / W3110 / ATCC 27325 / DSM 5911</strain>
    </source>
</reference>
<feature type="signal peptide" evidence="1">
    <location>
        <begin position="1"/>
        <end position="22"/>
    </location>
</feature>
<feature type="chain" id="PRO_0000013803" description="Uncharacterized lipoprotein YbfP">
    <location>
        <begin position="23"/>
        <end position="164"/>
    </location>
</feature>
<feature type="lipid moiety-binding region" description="N-palmitoyl cysteine" evidence="1">
    <location>
        <position position="23"/>
    </location>
</feature>
<feature type="lipid moiety-binding region" description="S-diacylglycerol cysteine" evidence="1">
    <location>
        <position position="23"/>
    </location>
</feature>
<gene>
    <name type="primary">ybfP</name>
    <name type="ordered locus">b0689</name>
    <name type="ordered locus">JW0676</name>
</gene>
<name>YBFP_ECOLI</name>
<evidence type="ECO:0000255" key="1">
    <source>
        <dbReference type="PROSITE-ProRule" id="PRU00303"/>
    </source>
</evidence>
<evidence type="ECO:0000305" key="2"/>
<keyword id="KW-1003">Cell membrane</keyword>
<keyword id="KW-0449">Lipoprotein</keyword>
<keyword id="KW-0472">Membrane</keyword>
<keyword id="KW-0564">Palmitate</keyword>
<keyword id="KW-1185">Reference proteome</keyword>
<keyword id="KW-0732">Signal</keyword>
<sequence>MKTNRSLVVIVSLITATLLLTACAQPEQSSLAGDWLLTPKDKTRGLTGSIAVNIAPFRCKTNCRGDNLPDNTRRWQLSGGNEKELTYLHNMSAQEKVGLNPGWQCYTSFFMRVCQGKPGTRPIVNEDYVSESGFFGSMMHVGIIELRRCQSENCQQELKAINTH</sequence>
<protein>
    <recommendedName>
        <fullName>Uncharacterized lipoprotein YbfP</fullName>
    </recommendedName>
</protein>